<comment type="similarity">
    <text evidence="1">Belongs to the bacterial ribosomal protein bS16 family.</text>
</comment>
<evidence type="ECO:0000255" key="1">
    <source>
        <dbReference type="HAMAP-Rule" id="MF_00385"/>
    </source>
</evidence>
<evidence type="ECO:0000305" key="2"/>
<reference key="1">
    <citation type="journal article" date="2006" name="Proc. Natl. Acad. Sci. U.S.A.">
        <title>Comparative genomics of the lactic acid bacteria.</title>
        <authorList>
            <person name="Makarova K.S."/>
            <person name="Slesarev A."/>
            <person name="Wolf Y.I."/>
            <person name="Sorokin A."/>
            <person name="Mirkin B."/>
            <person name="Koonin E.V."/>
            <person name="Pavlov A."/>
            <person name="Pavlova N."/>
            <person name="Karamychev V."/>
            <person name="Polouchine N."/>
            <person name="Shakhova V."/>
            <person name="Grigoriev I."/>
            <person name="Lou Y."/>
            <person name="Rohksar D."/>
            <person name="Lucas S."/>
            <person name="Huang K."/>
            <person name="Goodstein D.M."/>
            <person name="Hawkins T."/>
            <person name="Plengvidhya V."/>
            <person name="Welker D."/>
            <person name="Hughes J."/>
            <person name="Goh Y."/>
            <person name="Benson A."/>
            <person name="Baldwin K."/>
            <person name="Lee J.-H."/>
            <person name="Diaz-Muniz I."/>
            <person name="Dosti B."/>
            <person name="Smeianov V."/>
            <person name="Wechter W."/>
            <person name="Barabote R."/>
            <person name="Lorca G."/>
            <person name="Altermann E."/>
            <person name="Barrangou R."/>
            <person name="Ganesan B."/>
            <person name="Xie Y."/>
            <person name="Rawsthorne H."/>
            <person name="Tamir D."/>
            <person name="Parker C."/>
            <person name="Breidt F."/>
            <person name="Broadbent J.R."/>
            <person name="Hutkins R."/>
            <person name="O'Sullivan D."/>
            <person name="Steele J."/>
            <person name="Unlu G."/>
            <person name="Saier M.H. Jr."/>
            <person name="Klaenhammer T."/>
            <person name="Richardson P."/>
            <person name="Kozyavkin S."/>
            <person name="Weimer B.C."/>
            <person name="Mills D.A."/>
        </authorList>
    </citation>
    <scope>NUCLEOTIDE SEQUENCE [LARGE SCALE GENOMIC DNA]</scope>
    <source>
        <strain>ATCC BAA-331 / PSU-1</strain>
    </source>
</reference>
<sequence>MSVKIRLHLMGTKKRPFYRIVVADSRARRDGRFIEEVGYYNPITKPAEIKLNDDQIFNWLMKGAQPTNTVRNFLSDAGLMKKLHEAKLAAKKESKK</sequence>
<keyword id="KW-1185">Reference proteome</keyword>
<keyword id="KW-0687">Ribonucleoprotein</keyword>
<keyword id="KW-0689">Ribosomal protein</keyword>
<proteinExistence type="inferred from homology"/>
<gene>
    <name evidence="1" type="primary">rpsP</name>
    <name type="ordered locus">OEOE_0798</name>
</gene>
<name>RS16_OENOB</name>
<feature type="chain" id="PRO_1000049305" description="Small ribosomal subunit protein bS16">
    <location>
        <begin position="1"/>
        <end position="96"/>
    </location>
</feature>
<organism>
    <name type="scientific">Oenococcus oeni (strain ATCC BAA-331 / PSU-1)</name>
    <dbReference type="NCBI Taxonomy" id="203123"/>
    <lineage>
        <taxon>Bacteria</taxon>
        <taxon>Bacillati</taxon>
        <taxon>Bacillota</taxon>
        <taxon>Bacilli</taxon>
        <taxon>Lactobacillales</taxon>
        <taxon>Lactobacillaceae</taxon>
        <taxon>Oenococcus</taxon>
    </lineage>
</organism>
<protein>
    <recommendedName>
        <fullName evidence="1">Small ribosomal subunit protein bS16</fullName>
    </recommendedName>
    <alternativeName>
        <fullName evidence="2">30S ribosomal protein S16</fullName>
    </alternativeName>
</protein>
<dbReference type="EMBL" id="CP000411">
    <property type="protein sequence ID" value="ABJ56724.1"/>
    <property type="molecule type" value="Genomic_DNA"/>
</dbReference>
<dbReference type="RefSeq" id="WP_002821466.1">
    <property type="nucleotide sequence ID" value="NC_008528.1"/>
</dbReference>
<dbReference type="SMR" id="Q04FP8"/>
<dbReference type="STRING" id="203123.OEOE_0798"/>
<dbReference type="KEGG" id="ooe:OEOE_0798"/>
<dbReference type="eggNOG" id="COG0228">
    <property type="taxonomic scope" value="Bacteria"/>
</dbReference>
<dbReference type="HOGENOM" id="CLU_100590_5_0_9"/>
<dbReference type="Proteomes" id="UP000000774">
    <property type="component" value="Chromosome"/>
</dbReference>
<dbReference type="GO" id="GO:0005737">
    <property type="term" value="C:cytoplasm"/>
    <property type="evidence" value="ECO:0007669"/>
    <property type="project" value="UniProtKB-ARBA"/>
</dbReference>
<dbReference type="GO" id="GO:0015935">
    <property type="term" value="C:small ribosomal subunit"/>
    <property type="evidence" value="ECO:0007669"/>
    <property type="project" value="TreeGrafter"/>
</dbReference>
<dbReference type="GO" id="GO:0003735">
    <property type="term" value="F:structural constituent of ribosome"/>
    <property type="evidence" value="ECO:0007669"/>
    <property type="project" value="InterPro"/>
</dbReference>
<dbReference type="GO" id="GO:0006412">
    <property type="term" value="P:translation"/>
    <property type="evidence" value="ECO:0007669"/>
    <property type="project" value="UniProtKB-UniRule"/>
</dbReference>
<dbReference type="Gene3D" id="3.30.1320.10">
    <property type="match status" value="1"/>
</dbReference>
<dbReference type="HAMAP" id="MF_00385">
    <property type="entry name" value="Ribosomal_bS16"/>
    <property type="match status" value="1"/>
</dbReference>
<dbReference type="InterPro" id="IPR000307">
    <property type="entry name" value="Ribosomal_bS16"/>
</dbReference>
<dbReference type="InterPro" id="IPR023803">
    <property type="entry name" value="Ribosomal_bS16_dom_sf"/>
</dbReference>
<dbReference type="NCBIfam" id="TIGR00002">
    <property type="entry name" value="S16"/>
    <property type="match status" value="1"/>
</dbReference>
<dbReference type="PANTHER" id="PTHR12919">
    <property type="entry name" value="30S RIBOSOMAL PROTEIN S16"/>
    <property type="match status" value="1"/>
</dbReference>
<dbReference type="PANTHER" id="PTHR12919:SF20">
    <property type="entry name" value="SMALL RIBOSOMAL SUBUNIT PROTEIN BS16M"/>
    <property type="match status" value="1"/>
</dbReference>
<dbReference type="Pfam" id="PF00886">
    <property type="entry name" value="Ribosomal_S16"/>
    <property type="match status" value="1"/>
</dbReference>
<dbReference type="SUPFAM" id="SSF54565">
    <property type="entry name" value="Ribosomal protein S16"/>
    <property type="match status" value="1"/>
</dbReference>
<accession>Q04FP8</accession>